<accession>A8Y9C6</accession>
<evidence type="ECO:0000250" key="1"/>
<evidence type="ECO:0000305" key="2"/>
<keyword id="KW-0150">Chloroplast</keyword>
<keyword id="KW-0934">Plastid</keyword>
<keyword id="KW-0687">Ribonucleoprotein</keyword>
<keyword id="KW-0689">Ribosomal protein</keyword>
<keyword id="KW-0694">RNA-binding</keyword>
<keyword id="KW-0699">rRNA-binding</keyword>
<organism>
    <name type="scientific">Lolium perenne</name>
    <name type="common">Perennial ryegrass</name>
    <dbReference type="NCBI Taxonomy" id="4522"/>
    <lineage>
        <taxon>Eukaryota</taxon>
        <taxon>Viridiplantae</taxon>
        <taxon>Streptophyta</taxon>
        <taxon>Embryophyta</taxon>
        <taxon>Tracheophyta</taxon>
        <taxon>Spermatophyta</taxon>
        <taxon>Magnoliopsida</taxon>
        <taxon>Liliopsida</taxon>
        <taxon>Poales</taxon>
        <taxon>Poaceae</taxon>
        <taxon>BOP clade</taxon>
        <taxon>Pooideae</taxon>
        <taxon>Poodae</taxon>
        <taxon>Poeae</taxon>
        <taxon>Poeae Chloroplast Group 2 (Poeae type)</taxon>
        <taxon>Loliodinae</taxon>
        <taxon>Loliinae</taxon>
        <taxon>Lolium</taxon>
    </lineage>
</organism>
<sequence>MTSFKLVKYIPRIKKKKSGLRKLARKVPTDRLLKFERIFKAQKRINMSVFKAQRVLDEIRWRYYEETVMILNLMPYRASYPILKLVYSASANATHYRNFDKANLFITKAEVSRSTIMKKFRPRARGRSFPIKKNMCHITIILNIVKK</sequence>
<gene>
    <name type="primary">rpl22</name>
    <name type="ordered locus">LopeCp081</name>
</gene>
<reference key="1">
    <citation type="journal article" date="2008" name="PLoS ONE">
        <title>An optimized chloroplast DNA extraction protocol for grasses (Poaceae) proves suitable for whole plastid genome sequencing and SNP detection.</title>
        <authorList>
            <person name="Diekmann K."/>
            <person name="Hodkinson T.R."/>
            <person name="Fricke E."/>
            <person name="Barth S."/>
        </authorList>
    </citation>
    <scope>NUCLEOTIDE SEQUENCE [LARGE SCALE GENOMIC DNA]</scope>
    <source>
        <strain>cv. Cashel</strain>
    </source>
</reference>
<geneLocation type="chloroplast"/>
<comment type="function">
    <text evidence="1">This protein binds specifically to 23S rRNA.</text>
</comment>
<comment type="function">
    <text evidence="1">The globular domain of the protein is located near the polypeptide exit tunnel on the outside of the subunit, while an extended beta-hairpin is found that lines the wall of the exit tunnel in the center of the 70S ribosome.</text>
</comment>
<comment type="subunit">
    <text evidence="1">Part of the 50S ribosomal subunit.</text>
</comment>
<comment type="subcellular location">
    <subcellularLocation>
        <location>Plastid</location>
        <location>Chloroplast</location>
    </subcellularLocation>
</comment>
<comment type="similarity">
    <text evidence="2">Belongs to the universal ribosomal protein uL22 family.</text>
</comment>
<feature type="chain" id="PRO_0000354581" description="Large ribosomal subunit protein uL22c">
    <location>
        <begin position="1"/>
        <end position="147"/>
    </location>
</feature>
<proteinExistence type="inferred from homology"/>
<protein>
    <recommendedName>
        <fullName evidence="2">Large ribosomal subunit protein uL22c</fullName>
    </recommendedName>
    <alternativeName>
        <fullName>50S ribosomal protein L22, chloroplastic</fullName>
    </alternativeName>
</protein>
<dbReference type="EMBL" id="AM777385">
    <property type="protein sequence ID" value="CAO86015.1"/>
    <property type="molecule type" value="Genomic_DNA"/>
</dbReference>
<dbReference type="RefSeq" id="YP_001531321.1">
    <property type="nucleotide sequence ID" value="NC_009950.1"/>
</dbReference>
<dbReference type="SMR" id="A8Y9C6"/>
<dbReference type="GeneID" id="5696632"/>
<dbReference type="KEGG" id="lper:5696632"/>
<dbReference type="GO" id="GO:0009507">
    <property type="term" value="C:chloroplast"/>
    <property type="evidence" value="ECO:0007669"/>
    <property type="project" value="UniProtKB-SubCell"/>
</dbReference>
<dbReference type="GO" id="GO:0015934">
    <property type="term" value="C:large ribosomal subunit"/>
    <property type="evidence" value="ECO:0007669"/>
    <property type="project" value="InterPro"/>
</dbReference>
<dbReference type="GO" id="GO:0019843">
    <property type="term" value="F:rRNA binding"/>
    <property type="evidence" value="ECO:0007669"/>
    <property type="project" value="UniProtKB-UniRule"/>
</dbReference>
<dbReference type="GO" id="GO:0003735">
    <property type="term" value="F:structural constituent of ribosome"/>
    <property type="evidence" value="ECO:0007669"/>
    <property type="project" value="InterPro"/>
</dbReference>
<dbReference type="GO" id="GO:0006412">
    <property type="term" value="P:translation"/>
    <property type="evidence" value="ECO:0007669"/>
    <property type="project" value="UniProtKB-UniRule"/>
</dbReference>
<dbReference type="CDD" id="cd00336">
    <property type="entry name" value="Ribosomal_L22"/>
    <property type="match status" value="1"/>
</dbReference>
<dbReference type="FunFam" id="3.90.470.10:FF:000004">
    <property type="entry name" value="50S ribosomal protein L22, chloroplastic"/>
    <property type="match status" value="1"/>
</dbReference>
<dbReference type="Gene3D" id="3.90.470.10">
    <property type="entry name" value="Ribosomal protein L22/L17"/>
    <property type="match status" value="1"/>
</dbReference>
<dbReference type="HAMAP" id="MF_01331_B">
    <property type="entry name" value="Ribosomal_uL22_B"/>
    <property type="match status" value="1"/>
</dbReference>
<dbReference type="InterPro" id="IPR001063">
    <property type="entry name" value="Ribosomal_uL22"/>
</dbReference>
<dbReference type="InterPro" id="IPR005727">
    <property type="entry name" value="Ribosomal_uL22_bac/chlpt-type"/>
</dbReference>
<dbReference type="InterPro" id="IPR047867">
    <property type="entry name" value="Ribosomal_uL22_bac/org-type"/>
</dbReference>
<dbReference type="InterPro" id="IPR018260">
    <property type="entry name" value="Ribosomal_uL22_CS"/>
</dbReference>
<dbReference type="InterPro" id="IPR036394">
    <property type="entry name" value="Ribosomal_uL22_sf"/>
</dbReference>
<dbReference type="NCBIfam" id="TIGR01044">
    <property type="entry name" value="rplV_bact"/>
    <property type="match status" value="1"/>
</dbReference>
<dbReference type="PANTHER" id="PTHR13501">
    <property type="entry name" value="CHLOROPLAST 50S RIBOSOMAL PROTEIN L22-RELATED"/>
    <property type="match status" value="1"/>
</dbReference>
<dbReference type="PANTHER" id="PTHR13501:SF10">
    <property type="entry name" value="LARGE RIBOSOMAL SUBUNIT PROTEIN UL22M"/>
    <property type="match status" value="1"/>
</dbReference>
<dbReference type="Pfam" id="PF00237">
    <property type="entry name" value="Ribosomal_L22"/>
    <property type="match status" value="1"/>
</dbReference>
<dbReference type="SUPFAM" id="SSF54843">
    <property type="entry name" value="Ribosomal protein L22"/>
    <property type="match status" value="1"/>
</dbReference>
<dbReference type="PROSITE" id="PS00464">
    <property type="entry name" value="RIBOSOMAL_L22"/>
    <property type="match status" value="1"/>
</dbReference>
<name>RK22_LOLPR</name>